<organism>
    <name type="scientific">Aspergillus clavatus (strain ATCC 1007 / CBS 513.65 / DSM 816 / NCTC 3887 / NRRL 1 / QM 1276 / 107)</name>
    <dbReference type="NCBI Taxonomy" id="344612"/>
    <lineage>
        <taxon>Eukaryota</taxon>
        <taxon>Fungi</taxon>
        <taxon>Dikarya</taxon>
        <taxon>Ascomycota</taxon>
        <taxon>Pezizomycotina</taxon>
        <taxon>Eurotiomycetes</taxon>
        <taxon>Eurotiomycetidae</taxon>
        <taxon>Eurotiales</taxon>
        <taxon>Aspergillaceae</taxon>
        <taxon>Aspergillus</taxon>
        <taxon>Aspergillus subgen. Fumigati</taxon>
    </lineage>
</organism>
<proteinExistence type="inferred from homology"/>
<gene>
    <name type="primary">bglI</name>
    <name type="ORF">ACLA_010450</name>
</gene>
<comment type="function">
    <text evidence="1">Beta-glucosidases are one of a number of cellulolytic enzymes involved in the degradation of cellulosic biomass. Catalyzes the last step releasing glucose from the inhibitory cellobiose (By similarity).</text>
</comment>
<comment type="catalytic activity">
    <reaction>
        <text>Hydrolysis of terminal, non-reducing beta-D-glucosyl residues with release of beta-D-glucose.</text>
        <dbReference type="EC" id="3.2.1.21"/>
    </reaction>
</comment>
<comment type="pathway">
    <text>Glycan metabolism; cellulose degradation.</text>
</comment>
<comment type="subcellular location">
    <subcellularLocation>
        <location evidence="1">Secreted</location>
    </subcellularLocation>
</comment>
<comment type="similarity">
    <text evidence="4">Belongs to the glycosyl hydrolase 3 family.</text>
</comment>
<keyword id="KW-0119">Carbohydrate metabolism</keyword>
<keyword id="KW-0136">Cellulose degradation</keyword>
<keyword id="KW-0325">Glycoprotein</keyword>
<keyword id="KW-0326">Glycosidase</keyword>
<keyword id="KW-0378">Hydrolase</keyword>
<keyword id="KW-0624">Polysaccharide degradation</keyword>
<keyword id="KW-1185">Reference proteome</keyword>
<keyword id="KW-0964">Secreted</keyword>
<dbReference type="EC" id="3.2.1.21"/>
<dbReference type="EMBL" id="DS027049">
    <property type="protein sequence ID" value="EAW12619.1"/>
    <property type="molecule type" value="Genomic_DNA"/>
</dbReference>
<dbReference type="RefSeq" id="XP_001274045.1">
    <property type="nucleotide sequence ID" value="XM_001274044.1"/>
</dbReference>
<dbReference type="SMR" id="A1CA51"/>
<dbReference type="STRING" id="344612.A1CA51"/>
<dbReference type="GlyCosmos" id="A1CA51">
    <property type="glycosylation" value="3 sites, No reported glycans"/>
</dbReference>
<dbReference type="EnsemblFungi" id="EAW12619">
    <property type="protein sequence ID" value="EAW12619"/>
    <property type="gene ID" value="ACLA_010450"/>
</dbReference>
<dbReference type="GeneID" id="4706951"/>
<dbReference type="KEGG" id="act:ACLA_010450"/>
<dbReference type="VEuPathDB" id="FungiDB:ACLA_010450"/>
<dbReference type="eggNOG" id="ENOG502QR4D">
    <property type="taxonomic scope" value="Eukaryota"/>
</dbReference>
<dbReference type="HOGENOM" id="CLU_004542_4_0_1"/>
<dbReference type="OMA" id="QLWIVPP"/>
<dbReference type="OrthoDB" id="47059at2759"/>
<dbReference type="UniPathway" id="UPA00696"/>
<dbReference type="Proteomes" id="UP000006701">
    <property type="component" value="Unassembled WGS sequence"/>
</dbReference>
<dbReference type="GO" id="GO:0005576">
    <property type="term" value="C:extracellular region"/>
    <property type="evidence" value="ECO:0007669"/>
    <property type="project" value="UniProtKB-SubCell"/>
</dbReference>
<dbReference type="GO" id="GO:0008422">
    <property type="term" value="F:beta-glucosidase activity"/>
    <property type="evidence" value="ECO:0007669"/>
    <property type="project" value="UniProtKB-EC"/>
</dbReference>
<dbReference type="GO" id="GO:0030245">
    <property type="term" value="P:cellulose catabolic process"/>
    <property type="evidence" value="ECO:0007669"/>
    <property type="project" value="UniProtKB-UniPathway"/>
</dbReference>
<dbReference type="FunFam" id="3.20.20.300:FF:000006">
    <property type="entry name" value="Beta-glucosidase H"/>
    <property type="match status" value="1"/>
</dbReference>
<dbReference type="FunFam" id="2.60.40.10:FF:000495">
    <property type="entry name" value="Periplasmic beta-glucosidase"/>
    <property type="match status" value="1"/>
</dbReference>
<dbReference type="FunFam" id="2.60.120.260:FF:000119">
    <property type="entry name" value="Probable beta-glucosidase I"/>
    <property type="match status" value="1"/>
</dbReference>
<dbReference type="Gene3D" id="2.60.120.260">
    <property type="entry name" value="Galactose-binding domain-like"/>
    <property type="match status" value="1"/>
</dbReference>
<dbReference type="Gene3D" id="3.40.50.1700">
    <property type="entry name" value="Glycoside hydrolase family 3 C-terminal domain"/>
    <property type="match status" value="1"/>
</dbReference>
<dbReference type="Gene3D" id="3.20.20.300">
    <property type="entry name" value="Glycoside hydrolase, family 3, N-terminal domain"/>
    <property type="match status" value="1"/>
</dbReference>
<dbReference type="Gene3D" id="2.60.40.10">
    <property type="entry name" value="Immunoglobulins"/>
    <property type="match status" value="1"/>
</dbReference>
<dbReference type="InterPro" id="IPR050288">
    <property type="entry name" value="Cellulose_deg_GH3"/>
</dbReference>
<dbReference type="InterPro" id="IPR026891">
    <property type="entry name" value="Fn3-like"/>
</dbReference>
<dbReference type="InterPro" id="IPR019800">
    <property type="entry name" value="Glyco_hydro_3_AS"/>
</dbReference>
<dbReference type="InterPro" id="IPR002772">
    <property type="entry name" value="Glyco_hydro_3_C"/>
</dbReference>
<dbReference type="InterPro" id="IPR036881">
    <property type="entry name" value="Glyco_hydro_3_C_sf"/>
</dbReference>
<dbReference type="InterPro" id="IPR001764">
    <property type="entry name" value="Glyco_hydro_3_N"/>
</dbReference>
<dbReference type="InterPro" id="IPR036962">
    <property type="entry name" value="Glyco_hydro_3_N_sf"/>
</dbReference>
<dbReference type="InterPro" id="IPR017853">
    <property type="entry name" value="Glycoside_hydrolase_SF"/>
</dbReference>
<dbReference type="InterPro" id="IPR013783">
    <property type="entry name" value="Ig-like_fold"/>
</dbReference>
<dbReference type="InterPro" id="IPR037524">
    <property type="entry name" value="PA14/GLEYA"/>
</dbReference>
<dbReference type="InterPro" id="IPR011658">
    <property type="entry name" value="PA14_dom"/>
</dbReference>
<dbReference type="PANTHER" id="PTHR42715">
    <property type="entry name" value="BETA-GLUCOSIDASE"/>
    <property type="match status" value="1"/>
</dbReference>
<dbReference type="PANTHER" id="PTHR42715:SF27">
    <property type="entry name" value="BETA-GLUCOSIDASE-RELATED"/>
    <property type="match status" value="1"/>
</dbReference>
<dbReference type="Pfam" id="PF14310">
    <property type="entry name" value="Fn3-like"/>
    <property type="match status" value="1"/>
</dbReference>
<dbReference type="Pfam" id="PF00933">
    <property type="entry name" value="Glyco_hydro_3"/>
    <property type="match status" value="1"/>
</dbReference>
<dbReference type="Pfam" id="PF01915">
    <property type="entry name" value="Glyco_hydro_3_C"/>
    <property type="match status" value="1"/>
</dbReference>
<dbReference type="Pfam" id="PF07691">
    <property type="entry name" value="PA14"/>
    <property type="match status" value="1"/>
</dbReference>
<dbReference type="PRINTS" id="PR00133">
    <property type="entry name" value="GLHYDRLASE3"/>
</dbReference>
<dbReference type="SMART" id="SM01217">
    <property type="entry name" value="Fn3_like"/>
    <property type="match status" value="1"/>
</dbReference>
<dbReference type="SMART" id="SM00758">
    <property type="entry name" value="PA14"/>
    <property type="match status" value="1"/>
</dbReference>
<dbReference type="SUPFAM" id="SSF51445">
    <property type="entry name" value="(Trans)glycosidases"/>
    <property type="match status" value="1"/>
</dbReference>
<dbReference type="SUPFAM" id="SSF52279">
    <property type="entry name" value="Beta-D-glucan exohydrolase, C-terminal domain"/>
    <property type="match status" value="1"/>
</dbReference>
<dbReference type="PROSITE" id="PS00775">
    <property type="entry name" value="GLYCOSYL_HYDROL_F3"/>
    <property type="match status" value="1"/>
</dbReference>
<dbReference type="PROSITE" id="PS51820">
    <property type="entry name" value="PA14"/>
    <property type="match status" value="1"/>
</dbReference>
<evidence type="ECO:0000250" key="1"/>
<evidence type="ECO:0000255" key="2"/>
<evidence type="ECO:0000255" key="3">
    <source>
        <dbReference type="PROSITE-ProRule" id="PRU01164"/>
    </source>
</evidence>
<evidence type="ECO:0000305" key="4"/>
<feature type="chain" id="PRO_0000394883" description="Probable beta-glucosidase I">
    <location>
        <begin position="1"/>
        <end position="838"/>
    </location>
</feature>
<feature type="domain" description="PA14" evidence="3">
    <location>
        <begin position="395"/>
        <end position="555"/>
    </location>
</feature>
<feature type="active site" evidence="1">
    <location>
        <position position="225"/>
    </location>
</feature>
<feature type="glycosylation site" description="N-linked (GlcNAc...) asparagine" evidence="2">
    <location>
        <position position="57"/>
    </location>
</feature>
<feature type="glycosylation site" description="N-linked (GlcNAc...) asparagine" evidence="2">
    <location>
        <position position="197"/>
    </location>
</feature>
<feature type="glycosylation site" description="N-linked (GlcNAc...) asparagine" evidence="2">
    <location>
        <position position="493"/>
    </location>
</feature>
<sequence>MVQFDVEKTLEELTLGEKVALTAGTDFWHTAAVPRLNIPSLRMSDGPNGVRGTRFFNGTRAACFPCSTALGATWDTELLYEVGRLMAEESIAKGSHIILGPTINTQRSPLGGRGFESFAEDGVLSGLLAGNYCKGLQDKGVAATLKHFVCNDQEHERLAVDSIVTMRAMREIYLMPFHLAMRLCKTACVMTAYNKINGTHVSENKQIITDILRKEWGWDGLVMSDWFGTYSTSDAINAGLDLEMPGPTRWRGTALAHAVSSNKAFEYVLDERVRNVLNLHNFVEPLGIPENAPEEALNRPEDQALLRRAAAESVVLMKNEDNILPLKKEKSILVIGPNAKTAAYCGGGSASLDAYYTVAPFDGVKAKSEGEVSFSQGVYSYNELPVLGPLLKTEEGEKGFKFRVYNEPSSNPNRELLDELRLENSLGFLMDYKHPKVTSFLFYADMEGYFTPEEDGIYDFGVTVQGTGKLYIDGELVVDNSKNQRQGTAFFGNATVEEKGSKELKAGQTYKVVVEFGSAPTSDLDMRGVVVFGPGGFRFGAARRVGQEELISKAAELASQADQVVIFAGLTSEWETEGHDRDHMDLPAGSDEMISRVLDANPNAVVVIQSGTPVTMPWAHKTKALLQAWFGGNECGNGIADVLYGDVNPSAKLPLSFPVRLQDNPSYLNFRSERGRVLYGEDVYVGYRYYEKVDLAPLFPFGHGLSYTTFSRSDLSLATVPEKRQLEDGEPITATVTVTNTGDVAGAEVVQLWIVPPPTGVNRPVRELKGFAKVFLNPGESKTVEIVVEKKLATSWWDEQREKWASEKGTYKVLVTGTGDEVLKSSFEVEKTRFWLGL</sequence>
<accession>A1CA51</accession>
<name>BGLI_ASPCL</name>
<protein>
    <recommendedName>
        <fullName>Probable beta-glucosidase I</fullName>
        <ecNumber>3.2.1.21</ecNumber>
    </recommendedName>
    <alternativeName>
        <fullName>Beta-D-glucoside glucohydrolase I</fullName>
    </alternativeName>
    <alternativeName>
        <fullName>Cellobiase I</fullName>
    </alternativeName>
    <alternativeName>
        <fullName>Gentiobiase I</fullName>
    </alternativeName>
</protein>
<reference key="1">
    <citation type="journal article" date="2008" name="PLoS Genet.">
        <title>Genomic islands in the pathogenic filamentous fungus Aspergillus fumigatus.</title>
        <authorList>
            <person name="Fedorova N.D."/>
            <person name="Khaldi N."/>
            <person name="Joardar V.S."/>
            <person name="Maiti R."/>
            <person name="Amedeo P."/>
            <person name="Anderson M.J."/>
            <person name="Crabtree J."/>
            <person name="Silva J.C."/>
            <person name="Badger J.H."/>
            <person name="Albarraq A."/>
            <person name="Angiuoli S."/>
            <person name="Bussey H."/>
            <person name="Bowyer P."/>
            <person name="Cotty P.J."/>
            <person name="Dyer P.S."/>
            <person name="Egan A."/>
            <person name="Galens K."/>
            <person name="Fraser-Liggett C.M."/>
            <person name="Haas B.J."/>
            <person name="Inman J.M."/>
            <person name="Kent R."/>
            <person name="Lemieux S."/>
            <person name="Malavazi I."/>
            <person name="Orvis J."/>
            <person name="Roemer T."/>
            <person name="Ronning C.M."/>
            <person name="Sundaram J.P."/>
            <person name="Sutton G."/>
            <person name="Turner G."/>
            <person name="Venter J.C."/>
            <person name="White O.R."/>
            <person name="Whitty B.R."/>
            <person name="Youngman P."/>
            <person name="Wolfe K.H."/>
            <person name="Goldman G.H."/>
            <person name="Wortman J.R."/>
            <person name="Jiang B."/>
            <person name="Denning D.W."/>
            <person name="Nierman W.C."/>
        </authorList>
    </citation>
    <scope>NUCLEOTIDE SEQUENCE [LARGE SCALE GENOMIC DNA]</scope>
    <source>
        <strain>ATCC 1007 / CBS 513.65 / DSM 816 / NCTC 3887 / NRRL 1 / QM 1276 / 107</strain>
    </source>
</reference>